<proteinExistence type="inferred from homology"/>
<comment type="function">
    <text evidence="1">Involved in the modulation of the specificity of the ClpAP-mediated ATP-dependent protein degradation.</text>
</comment>
<comment type="subunit">
    <text evidence="1">Binds to the N-terminal domain of the chaperone ClpA.</text>
</comment>
<comment type="similarity">
    <text evidence="1">Belongs to the ClpS family.</text>
</comment>
<sequence>MPRNTSHEHDHGLMVEASKPEVAPPPRYQVLLLNDDYTPMDFVVTVLEQFFNLNLEQATQIMLHVHTRGRGVCGVYSREVAESKVAQVNEFSRMNQHPLLCTMEQA</sequence>
<dbReference type="EMBL" id="AE008923">
    <property type="protein sequence ID" value="AAM36862.1"/>
    <property type="molecule type" value="Genomic_DNA"/>
</dbReference>
<dbReference type="RefSeq" id="WP_005914463.1">
    <property type="nucleotide sequence ID" value="NC_003919.1"/>
</dbReference>
<dbReference type="BMRB" id="Q8PL06"/>
<dbReference type="SMR" id="Q8PL06"/>
<dbReference type="GeneID" id="97510366"/>
<dbReference type="KEGG" id="xac:XAC2000"/>
<dbReference type="eggNOG" id="COG2127">
    <property type="taxonomic scope" value="Bacteria"/>
</dbReference>
<dbReference type="HOGENOM" id="CLU_134358_2_1_6"/>
<dbReference type="Proteomes" id="UP000000576">
    <property type="component" value="Chromosome"/>
</dbReference>
<dbReference type="GO" id="GO:0030163">
    <property type="term" value="P:protein catabolic process"/>
    <property type="evidence" value="ECO:0007669"/>
    <property type="project" value="InterPro"/>
</dbReference>
<dbReference type="GO" id="GO:0006508">
    <property type="term" value="P:proteolysis"/>
    <property type="evidence" value="ECO:0007669"/>
    <property type="project" value="UniProtKB-UniRule"/>
</dbReference>
<dbReference type="FunFam" id="3.30.1390.10:FF:000002">
    <property type="entry name" value="ATP-dependent Clp protease adapter protein ClpS"/>
    <property type="match status" value="1"/>
</dbReference>
<dbReference type="Gene3D" id="3.30.1390.10">
    <property type="match status" value="1"/>
</dbReference>
<dbReference type="HAMAP" id="MF_00302">
    <property type="entry name" value="ClpS"/>
    <property type="match status" value="1"/>
</dbReference>
<dbReference type="InterPro" id="IPR022935">
    <property type="entry name" value="ClpS"/>
</dbReference>
<dbReference type="InterPro" id="IPR003769">
    <property type="entry name" value="ClpS_core"/>
</dbReference>
<dbReference type="InterPro" id="IPR014719">
    <property type="entry name" value="Ribosomal_bL12_C/ClpS-like"/>
</dbReference>
<dbReference type="NCBIfam" id="NF000669">
    <property type="entry name" value="PRK00033.1-2"/>
    <property type="match status" value="1"/>
</dbReference>
<dbReference type="NCBIfam" id="NF000672">
    <property type="entry name" value="PRK00033.1-5"/>
    <property type="match status" value="1"/>
</dbReference>
<dbReference type="PANTHER" id="PTHR33473:SF19">
    <property type="entry name" value="ATP-DEPENDENT CLP PROTEASE ADAPTER PROTEIN CLPS"/>
    <property type="match status" value="1"/>
</dbReference>
<dbReference type="PANTHER" id="PTHR33473">
    <property type="entry name" value="ATP-DEPENDENT CLP PROTEASE ADAPTER PROTEIN CLPS1, CHLOROPLASTIC"/>
    <property type="match status" value="1"/>
</dbReference>
<dbReference type="Pfam" id="PF02617">
    <property type="entry name" value="ClpS"/>
    <property type="match status" value="1"/>
</dbReference>
<dbReference type="SUPFAM" id="SSF54736">
    <property type="entry name" value="ClpS-like"/>
    <property type="match status" value="1"/>
</dbReference>
<organism>
    <name type="scientific">Xanthomonas axonopodis pv. citri (strain 306)</name>
    <dbReference type="NCBI Taxonomy" id="190486"/>
    <lineage>
        <taxon>Bacteria</taxon>
        <taxon>Pseudomonadati</taxon>
        <taxon>Pseudomonadota</taxon>
        <taxon>Gammaproteobacteria</taxon>
        <taxon>Lysobacterales</taxon>
        <taxon>Lysobacteraceae</taxon>
        <taxon>Xanthomonas</taxon>
    </lineage>
</organism>
<reference key="1">
    <citation type="journal article" date="2002" name="Nature">
        <title>Comparison of the genomes of two Xanthomonas pathogens with differing host specificities.</title>
        <authorList>
            <person name="da Silva A.C.R."/>
            <person name="Ferro J.A."/>
            <person name="Reinach F.C."/>
            <person name="Farah C.S."/>
            <person name="Furlan L.R."/>
            <person name="Quaggio R.B."/>
            <person name="Monteiro-Vitorello C.B."/>
            <person name="Van Sluys M.A."/>
            <person name="Almeida N.F. Jr."/>
            <person name="Alves L.M.C."/>
            <person name="do Amaral A.M."/>
            <person name="Bertolini M.C."/>
            <person name="Camargo L.E.A."/>
            <person name="Camarotte G."/>
            <person name="Cannavan F."/>
            <person name="Cardozo J."/>
            <person name="Chambergo F."/>
            <person name="Ciapina L.P."/>
            <person name="Cicarelli R.M.B."/>
            <person name="Coutinho L.L."/>
            <person name="Cursino-Santos J.R."/>
            <person name="El-Dorry H."/>
            <person name="Faria J.B."/>
            <person name="Ferreira A.J.S."/>
            <person name="Ferreira R.C.C."/>
            <person name="Ferro M.I.T."/>
            <person name="Formighieri E.F."/>
            <person name="Franco M.C."/>
            <person name="Greggio C.C."/>
            <person name="Gruber A."/>
            <person name="Katsuyama A.M."/>
            <person name="Kishi L.T."/>
            <person name="Leite R.P."/>
            <person name="Lemos E.G.M."/>
            <person name="Lemos M.V.F."/>
            <person name="Locali E.C."/>
            <person name="Machado M.A."/>
            <person name="Madeira A.M.B.N."/>
            <person name="Martinez-Rossi N.M."/>
            <person name="Martins E.C."/>
            <person name="Meidanis J."/>
            <person name="Menck C.F.M."/>
            <person name="Miyaki C.Y."/>
            <person name="Moon D.H."/>
            <person name="Moreira L.M."/>
            <person name="Novo M.T.M."/>
            <person name="Okura V.K."/>
            <person name="Oliveira M.C."/>
            <person name="Oliveira V.R."/>
            <person name="Pereira H.A."/>
            <person name="Rossi A."/>
            <person name="Sena J.A.D."/>
            <person name="Silva C."/>
            <person name="de Souza R.F."/>
            <person name="Spinola L.A.F."/>
            <person name="Takita M.A."/>
            <person name="Tamura R.E."/>
            <person name="Teixeira E.C."/>
            <person name="Tezza R.I.D."/>
            <person name="Trindade dos Santos M."/>
            <person name="Truffi D."/>
            <person name="Tsai S.M."/>
            <person name="White F.F."/>
            <person name="Setubal J.C."/>
            <person name="Kitajima J.P."/>
        </authorList>
    </citation>
    <scope>NUCLEOTIDE SEQUENCE [LARGE SCALE GENOMIC DNA]</scope>
    <source>
        <strain>306</strain>
    </source>
</reference>
<feature type="chain" id="PRO_0000215762" description="ATP-dependent Clp protease adapter protein ClpS">
    <location>
        <begin position="1"/>
        <end position="106"/>
    </location>
</feature>
<feature type="region of interest" description="Disordered" evidence="2">
    <location>
        <begin position="1"/>
        <end position="20"/>
    </location>
</feature>
<feature type="compositionally biased region" description="Basic and acidic residues" evidence="2">
    <location>
        <begin position="1"/>
        <end position="13"/>
    </location>
</feature>
<name>CLPS_XANAC</name>
<evidence type="ECO:0000255" key="1">
    <source>
        <dbReference type="HAMAP-Rule" id="MF_00302"/>
    </source>
</evidence>
<evidence type="ECO:0000256" key="2">
    <source>
        <dbReference type="SAM" id="MobiDB-lite"/>
    </source>
</evidence>
<protein>
    <recommendedName>
        <fullName evidence="1">ATP-dependent Clp protease adapter protein ClpS</fullName>
    </recommendedName>
</protein>
<accession>Q8PL06</accession>
<gene>
    <name evidence="1" type="primary">clpS</name>
    <name type="ordered locus">XAC2000</name>
</gene>